<evidence type="ECO:0000255" key="1">
    <source>
        <dbReference type="HAMAP-Rule" id="MF_04070"/>
    </source>
</evidence>
<evidence type="ECO:0000256" key="2">
    <source>
        <dbReference type="SAM" id="MobiDB-lite"/>
    </source>
</evidence>
<gene>
    <name evidence="1" type="primary">NP</name>
</gene>
<keyword id="KW-0167">Capsid protein</keyword>
<keyword id="KW-1139">Helical capsid protein</keyword>
<keyword id="KW-1048">Host nucleus</keyword>
<keyword id="KW-0945">Host-virus interaction</keyword>
<keyword id="KW-0687">Ribonucleoprotein</keyword>
<keyword id="KW-0694">RNA-binding</keyword>
<keyword id="KW-0543">Viral nucleoprotein</keyword>
<keyword id="KW-1163">Viral penetration into host nucleus</keyword>
<keyword id="KW-0946">Virion</keyword>
<keyword id="KW-1160">Virus entry into host cell</keyword>
<reference key="1">
    <citation type="submission" date="2008-07" db="EMBL/GenBank/DDBJ databases">
        <title>The NIAID influenza genome sequencing project.</title>
        <authorList>
            <person name="Spiro D."/>
            <person name="Halpin R."/>
            <person name="Boyne A."/>
            <person name="Bera J."/>
            <person name="Ghedin E."/>
            <person name="Hostetler J."/>
            <person name="Fedorova N."/>
            <person name="Hine E."/>
            <person name="Overton L."/>
            <person name="Djuric K."/>
            <person name="Sarmiento M."/>
            <person name="Sitz J."/>
            <person name="Katzel D."/>
            <person name="Manojkumar R."/>
            <person name="Devis R."/>
            <person name="Fulvini A."/>
            <person name="Silverman J."/>
            <person name="Le J."/>
            <person name="Kilbourne E.D."/>
            <person name="Pokorny B."/>
            <person name="Bucher D."/>
            <person name="Orff E."/>
            <person name="Minieri J."/>
            <person name="Onodera S."/>
            <person name="Huang L."/>
            <person name="Bao Y."/>
            <person name="Sanders R."/>
            <person name="Dernovoy D."/>
            <person name="Kiryutin B."/>
            <person name="Lipman D.J."/>
            <person name="Tatusova T."/>
        </authorList>
    </citation>
    <scope>NUCLEOTIDE SEQUENCE [GENOMIC RNA]</scope>
</reference>
<reference key="2">
    <citation type="submission" date="2008-07" db="EMBL/GenBank/DDBJ databases">
        <authorList>
            <consortium name="The NIAID Influenza Genome Sequencing Consortium"/>
        </authorList>
    </citation>
    <scope>NUCLEOTIDE SEQUENCE [GENOMIC RNA]</scope>
</reference>
<organism>
    <name type="scientific">Influenza A virus (strain A/Russia:St.Petersburg/8/2006 H1N1)</name>
    <dbReference type="NCBI Taxonomy" id="518998"/>
    <lineage>
        <taxon>Viruses</taxon>
        <taxon>Riboviria</taxon>
        <taxon>Orthornavirae</taxon>
        <taxon>Negarnaviricota</taxon>
        <taxon>Polyploviricotina</taxon>
        <taxon>Insthoviricetes</taxon>
        <taxon>Articulavirales</taxon>
        <taxon>Orthomyxoviridae</taxon>
        <taxon>Alphainfluenzavirus</taxon>
        <taxon>Alphainfluenzavirus influenzae</taxon>
        <taxon>Influenza A virus</taxon>
    </lineage>
</organism>
<dbReference type="EMBL" id="CY034127">
    <property type="protein sequence ID" value="ACF54591.1"/>
    <property type="molecule type" value="Viral_cRNA"/>
</dbReference>
<dbReference type="SMR" id="B4URE0"/>
<dbReference type="PRO" id="PR:B4URE0"/>
<dbReference type="Proteomes" id="UP000008081">
    <property type="component" value="Genome"/>
</dbReference>
<dbReference type="GO" id="GO:0019029">
    <property type="term" value="C:helical viral capsid"/>
    <property type="evidence" value="ECO:0007669"/>
    <property type="project" value="UniProtKB-UniRule"/>
</dbReference>
<dbReference type="GO" id="GO:0043657">
    <property type="term" value="C:host cell"/>
    <property type="evidence" value="ECO:0007669"/>
    <property type="project" value="GOC"/>
</dbReference>
<dbReference type="GO" id="GO:0042025">
    <property type="term" value="C:host cell nucleus"/>
    <property type="evidence" value="ECO:0007669"/>
    <property type="project" value="UniProtKB-SubCell"/>
</dbReference>
<dbReference type="GO" id="GO:1990904">
    <property type="term" value="C:ribonucleoprotein complex"/>
    <property type="evidence" value="ECO:0007669"/>
    <property type="project" value="UniProtKB-KW"/>
</dbReference>
<dbReference type="GO" id="GO:0019013">
    <property type="term" value="C:viral nucleocapsid"/>
    <property type="evidence" value="ECO:0007669"/>
    <property type="project" value="UniProtKB-UniRule"/>
</dbReference>
<dbReference type="GO" id="GO:0003723">
    <property type="term" value="F:RNA binding"/>
    <property type="evidence" value="ECO:0007669"/>
    <property type="project" value="UniProtKB-UniRule"/>
</dbReference>
<dbReference type="GO" id="GO:0005198">
    <property type="term" value="F:structural molecule activity"/>
    <property type="evidence" value="ECO:0007669"/>
    <property type="project" value="UniProtKB-UniRule"/>
</dbReference>
<dbReference type="GO" id="GO:0046718">
    <property type="term" value="P:symbiont entry into host cell"/>
    <property type="evidence" value="ECO:0007669"/>
    <property type="project" value="UniProtKB-KW"/>
</dbReference>
<dbReference type="GO" id="GO:0075732">
    <property type="term" value="P:viral penetration into host nucleus"/>
    <property type="evidence" value="ECO:0007669"/>
    <property type="project" value="UniProtKB-UniRule"/>
</dbReference>
<dbReference type="HAMAP" id="MF_04070">
    <property type="entry name" value="INFV_NCAP"/>
    <property type="match status" value="1"/>
</dbReference>
<dbReference type="InterPro" id="IPR002141">
    <property type="entry name" value="Flu_NP"/>
</dbReference>
<dbReference type="Pfam" id="PF00506">
    <property type="entry name" value="Flu_NP"/>
    <property type="match status" value="1"/>
</dbReference>
<dbReference type="SUPFAM" id="SSF161003">
    <property type="entry name" value="flu NP-like"/>
    <property type="match status" value="1"/>
</dbReference>
<comment type="function">
    <text evidence="1">Encapsidates the negative strand viral RNA, protecting it from nucleases. The encapsidated genomic RNA is termed the ribonucleoprotein (RNP) and serves as template for transcription and replication. The RNP needs to be localized in the host nucleus to start an infectious cycle, but is too large to diffuse through the nuclear pore complex. NP comprises at least 2 nuclear localization signals that are responsible for the active RNP import into the nucleus through cellular importin alpha/beta pathway. Later in the infection, nclear export of RNPs are mediated through viral proteins NEP interacting with M1 which binds nucleoproteins. It is possible that nucleoprotein binds directly host exportin-1/XPO1 and plays an active role in RNPs nuclear export. M1 interaction with RNP seems to hide nucleoprotein's nuclear localization signals. Soon after a virion infects a new cell, M1 dissociates from the RNP under acidification of the virion driven by M2 protein. Dissociation of M1 from RNP unmasks nucleoprotein's nuclear localization signals, targeting the RNP to the nucleus.</text>
</comment>
<comment type="subunit">
    <text evidence="1">Homomultimerizes to form the nucleocapsid. May bind host exportin-1/XPO1. Binds to viral genomic RNA. Protein-RNA contacts are mediated by a combination of electrostatic interactions between positively charged residues and the phosphate backbone and planar interactions between aromatic side chains and bases.</text>
</comment>
<comment type="subcellular location">
    <subcellularLocation>
        <location evidence="1">Virion</location>
    </subcellularLocation>
    <subcellularLocation>
        <location evidence="1">Host nucleus</location>
    </subcellularLocation>
</comment>
<comment type="PTM">
    <text evidence="1">Late in virus-infected cells, may be cleaved from a 56-kDa protein to a 53-kDa protein by a cellular caspase. This cleavage might be a marker for the onset of apoptosis in infected cells or have a specific function in virus host interaction.</text>
</comment>
<comment type="similarity">
    <text evidence="1">Belongs to the influenza viruses nucleoprotein family.</text>
</comment>
<protein>
    <recommendedName>
        <fullName evidence="1">Nucleoprotein</fullName>
    </recommendedName>
    <alternativeName>
        <fullName evidence="1">Nucleocapsid protein</fullName>
        <shortName evidence="1">Protein N</shortName>
    </alternativeName>
</protein>
<proteinExistence type="inferred from homology"/>
<name>NCAP_I06A0</name>
<organismHost>
    <name type="scientific">Aves</name>
    <dbReference type="NCBI Taxonomy" id="8782"/>
</organismHost>
<organismHost>
    <name type="scientific">Homo sapiens</name>
    <name type="common">Human</name>
    <dbReference type="NCBI Taxonomy" id="9606"/>
</organismHost>
<organismHost>
    <name type="scientific">Sus scrofa</name>
    <name type="common">Pig</name>
    <dbReference type="NCBI Taxonomy" id="9823"/>
</organismHost>
<sequence length="498" mass="56228">MASQGTKRSYEQMETDGERQNATEIRASVGKMIGGIGRFYIQMCTELKLSDYEGRLIQNSLTIERMVLSAFDERRNKYLEEHPSAGKDPKKTGGPIYRRVNGKWMRELILYDKEEMRRIWRQANNGDDATAGLTHMMIWHSNLNDATYQRTRALVRTGMDPRMCSLMQGSTLPRRSGAAGAAVKGVGTMVMELVRMIKRGINDRNFWRGENGRKTRIAYERMCNILKGKFQTAAQKAMMDQVRESRNPGNAEFEDLTFLARSALILRGSVAHKSCLPACVYGPAVASGYDFEREGYSLVGIDPFRLLQNSQVYSLIRPNENPAHKSQLVWMACHSAAFEDLRVLSFIKGTKVLPRGKLSTRGVQIASNENMETMESSTLELRSRYWAIRTRSGGNTNQQRASAGQISIQPTFSVQRNLPFDRTTIMAAFNGNTEGRTSDMRTEIIRMMESARPEDVSFQGRGVFELSDEKAASPIVPSFDMSNEGSYFFGDNAEEYDN</sequence>
<accession>B4URE0</accession>
<feature type="chain" id="PRO_0000372932" description="Nucleoprotein">
    <location>
        <begin position="1"/>
        <end position="498"/>
    </location>
</feature>
<feature type="region of interest" description="Disordered" evidence="2">
    <location>
        <begin position="1"/>
        <end position="21"/>
    </location>
</feature>
<feature type="short sequence motif" description="Unconventional nuclear localization signal" evidence="1">
    <location>
        <begin position="1"/>
        <end position="18"/>
    </location>
</feature>
<feature type="short sequence motif" description="Bipartite nuclear localization signal" evidence="1">
    <location>
        <begin position="198"/>
        <end position="216"/>
    </location>
</feature>
<feature type="compositionally biased region" description="Basic and acidic residues" evidence="2">
    <location>
        <begin position="8"/>
        <end position="21"/>
    </location>
</feature>